<proteinExistence type="inferred from homology"/>
<reference key="1">
    <citation type="journal article" date="2007" name="Genome Res.">
        <title>Genome characteristics of facultatively symbiotic Frankia sp. strains reflect host range and host plant biogeography.</title>
        <authorList>
            <person name="Normand P."/>
            <person name="Lapierre P."/>
            <person name="Tisa L.S."/>
            <person name="Gogarten J.P."/>
            <person name="Alloisio N."/>
            <person name="Bagnarol E."/>
            <person name="Bassi C.A."/>
            <person name="Berry A.M."/>
            <person name="Bickhart D.M."/>
            <person name="Choisne N."/>
            <person name="Couloux A."/>
            <person name="Cournoyer B."/>
            <person name="Cruveiller S."/>
            <person name="Daubin V."/>
            <person name="Demange N."/>
            <person name="Francino M.P."/>
            <person name="Goltsman E."/>
            <person name="Huang Y."/>
            <person name="Kopp O.R."/>
            <person name="Labarre L."/>
            <person name="Lapidus A."/>
            <person name="Lavire C."/>
            <person name="Marechal J."/>
            <person name="Martinez M."/>
            <person name="Mastronunzio J.E."/>
            <person name="Mullin B.C."/>
            <person name="Niemann J."/>
            <person name="Pujic P."/>
            <person name="Rawnsley T."/>
            <person name="Rouy Z."/>
            <person name="Schenowitz C."/>
            <person name="Sellstedt A."/>
            <person name="Tavares F."/>
            <person name="Tomkins J.P."/>
            <person name="Vallenet D."/>
            <person name="Valverde C."/>
            <person name="Wall L.G."/>
            <person name="Wang Y."/>
            <person name="Medigue C."/>
            <person name="Benson D.R."/>
        </authorList>
    </citation>
    <scope>NUCLEOTIDE SEQUENCE [LARGE SCALE GENOMIC DNA]</scope>
    <source>
        <strain>EAN1pec</strain>
    </source>
</reference>
<keyword id="KW-0001">2Fe-2S</keyword>
<keyword id="KW-0004">4Fe-4S</keyword>
<keyword id="KW-0093">Biotin biosynthesis</keyword>
<keyword id="KW-0408">Iron</keyword>
<keyword id="KW-0411">Iron-sulfur</keyword>
<keyword id="KW-0479">Metal-binding</keyword>
<keyword id="KW-0949">S-adenosyl-L-methionine</keyword>
<keyword id="KW-0808">Transferase</keyword>
<sequence length="361" mass="38881">MTAPVTAPTTMPAQTPPTVETDVVTEAPRPLDDDILARARRQVLDEGRGLDEQDVLAVLQLPDEALGDLLALAHEVRLRWCGPEVEVEGIISLKTGGCPEDCHFCSQSGRFDSPVRSAWLDVPSLVEAAKATAATGATEFCIVAAVRGPDQRLMAQIREGVAAIREAVDINVACSLGMLTQEQVDELAGLGVHRYNHNLETARSHFPKVVTTHSWEERWETCELVRAAGMELCCGAIIGVGESLEQRAELAAQLAALEPDEVPLNFLNPRPGTPFGDLPAVDSREALRTIAAFRLALPRTILRYAGGREITLGDLDVQGMLGGINAVIVGNYLTTLGKNPESDLAMLTELRMPIKSLQATL</sequence>
<gene>
    <name evidence="1" type="primary">bioB</name>
    <name type="ordered locus">Franean1_0967</name>
</gene>
<organism>
    <name type="scientific">Parafrankia sp. (strain EAN1pec)</name>
    <dbReference type="NCBI Taxonomy" id="298653"/>
    <lineage>
        <taxon>Bacteria</taxon>
        <taxon>Bacillati</taxon>
        <taxon>Actinomycetota</taxon>
        <taxon>Actinomycetes</taxon>
        <taxon>Frankiales</taxon>
        <taxon>Frankiaceae</taxon>
        <taxon>Parafrankia</taxon>
    </lineage>
</organism>
<dbReference type="EC" id="2.8.1.6" evidence="1"/>
<dbReference type="EMBL" id="CP000820">
    <property type="protein sequence ID" value="ABW10423.1"/>
    <property type="molecule type" value="Genomic_DNA"/>
</dbReference>
<dbReference type="RefSeq" id="WP_020458610.1">
    <property type="nucleotide sequence ID" value="NC_009921.1"/>
</dbReference>
<dbReference type="SMR" id="A8L2N0"/>
<dbReference type="STRING" id="298653.Franean1_0967"/>
<dbReference type="KEGG" id="fre:Franean1_0967"/>
<dbReference type="eggNOG" id="COG0502">
    <property type="taxonomic scope" value="Bacteria"/>
</dbReference>
<dbReference type="HOGENOM" id="CLU_033172_2_1_11"/>
<dbReference type="UniPathway" id="UPA00078">
    <property type="reaction ID" value="UER00162"/>
</dbReference>
<dbReference type="GO" id="GO:0051537">
    <property type="term" value="F:2 iron, 2 sulfur cluster binding"/>
    <property type="evidence" value="ECO:0007669"/>
    <property type="project" value="UniProtKB-KW"/>
</dbReference>
<dbReference type="GO" id="GO:0051539">
    <property type="term" value="F:4 iron, 4 sulfur cluster binding"/>
    <property type="evidence" value="ECO:0007669"/>
    <property type="project" value="UniProtKB-KW"/>
</dbReference>
<dbReference type="GO" id="GO:0004076">
    <property type="term" value="F:biotin synthase activity"/>
    <property type="evidence" value="ECO:0007669"/>
    <property type="project" value="UniProtKB-UniRule"/>
</dbReference>
<dbReference type="GO" id="GO:0005506">
    <property type="term" value="F:iron ion binding"/>
    <property type="evidence" value="ECO:0007669"/>
    <property type="project" value="UniProtKB-UniRule"/>
</dbReference>
<dbReference type="GO" id="GO:0009102">
    <property type="term" value="P:biotin biosynthetic process"/>
    <property type="evidence" value="ECO:0007669"/>
    <property type="project" value="UniProtKB-UniRule"/>
</dbReference>
<dbReference type="CDD" id="cd01335">
    <property type="entry name" value="Radical_SAM"/>
    <property type="match status" value="1"/>
</dbReference>
<dbReference type="FunFam" id="3.20.20.70:FF:000026">
    <property type="entry name" value="Biotin synthase"/>
    <property type="match status" value="1"/>
</dbReference>
<dbReference type="Gene3D" id="3.20.20.70">
    <property type="entry name" value="Aldolase class I"/>
    <property type="match status" value="1"/>
</dbReference>
<dbReference type="HAMAP" id="MF_01694">
    <property type="entry name" value="BioB"/>
    <property type="match status" value="1"/>
</dbReference>
<dbReference type="InterPro" id="IPR013785">
    <property type="entry name" value="Aldolase_TIM"/>
</dbReference>
<dbReference type="InterPro" id="IPR010722">
    <property type="entry name" value="BATS_dom"/>
</dbReference>
<dbReference type="InterPro" id="IPR002684">
    <property type="entry name" value="Biotin_synth/BioAB"/>
</dbReference>
<dbReference type="InterPro" id="IPR024177">
    <property type="entry name" value="Biotin_synthase"/>
</dbReference>
<dbReference type="InterPro" id="IPR006638">
    <property type="entry name" value="Elp3/MiaA/NifB-like_rSAM"/>
</dbReference>
<dbReference type="InterPro" id="IPR007197">
    <property type="entry name" value="rSAM"/>
</dbReference>
<dbReference type="NCBIfam" id="TIGR00433">
    <property type="entry name" value="bioB"/>
    <property type="match status" value="1"/>
</dbReference>
<dbReference type="PANTHER" id="PTHR22976">
    <property type="entry name" value="BIOTIN SYNTHASE"/>
    <property type="match status" value="1"/>
</dbReference>
<dbReference type="PANTHER" id="PTHR22976:SF2">
    <property type="entry name" value="BIOTIN SYNTHASE, MITOCHONDRIAL"/>
    <property type="match status" value="1"/>
</dbReference>
<dbReference type="Pfam" id="PF06968">
    <property type="entry name" value="BATS"/>
    <property type="match status" value="1"/>
</dbReference>
<dbReference type="Pfam" id="PF04055">
    <property type="entry name" value="Radical_SAM"/>
    <property type="match status" value="1"/>
</dbReference>
<dbReference type="PIRSF" id="PIRSF001619">
    <property type="entry name" value="Biotin_synth"/>
    <property type="match status" value="1"/>
</dbReference>
<dbReference type="SFLD" id="SFLDG01060">
    <property type="entry name" value="BATS_domain_containing"/>
    <property type="match status" value="1"/>
</dbReference>
<dbReference type="SFLD" id="SFLDG01278">
    <property type="entry name" value="biotin_synthase_like"/>
    <property type="match status" value="1"/>
</dbReference>
<dbReference type="SMART" id="SM00876">
    <property type="entry name" value="BATS"/>
    <property type="match status" value="1"/>
</dbReference>
<dbReference type="SMART" id="SM00729">
    <property type="entry name" value="Elp3"/>
    <property type="match status" value="1"/>
</dbReference>
<dbReference type="SUPFAM" id="SSF102114">
    <property type="entry name" value="Radical SAM enzymes"/>
    <property type="match status" value="1"/>
</dbReference>
<dbReference type="PROSITE" id="PS51918">
    <property type="entry name" value="RADICAL_SAM"/>
    <property type="match status" value="1"/>
</dbReference>
<accession>A8L2N0</accession>
<feature type="chain" id="PRO_0000381390" description="Biotin synthase">
    <location>
        <begin position="1"/>
        <end position="361"/>
    </location>
</feature>
<feature type="domain" description="Radical SAM core" evidence="2">
    <location>
        <begin position="83"/>
        <end position="308"/>
    </location>
</feature>
<feature type="binding site" evidence="1">
    <location>
        <position position="98"/>
    </location>
    <ligand>
        <name>[4Fe-4S] cluster</name>
        <dbReference type="ChEBI" id="CHEBI:49883"/>
        <note>4Fe-4S-S-AdoMet</note>
    </ligand>
</feature>
<feature type="binding site" evidence="1">
    <location>
        <position position="102"/>
    </location>
    <ligand>
        <name>[4Fe-4S] cluster</name>
        <dbReference type="ChEBI" id="CHEBI:49883"/>
        <note>4Fe-4S-S-AdoMet</note>
    </ligand>
</feature>
<feature type="binding site" evidence="1">
    <location>
        <position position="105"/>
    </location>
    <ligand>
        <name>[4Fe-4S] cluster</name>
        <dbReference type="ChEBI" id="CHEBI:49883"/>
        <note>4Fe-4S-S-AdoMet</note>
    </ligand>
</feature>
<feature type="binding site" evidence="1">
    <location>
        <position position="141"/>
    </location>
    <ligand>
        <name>[2Fe-2S] cluster</name>
        <dbReference type="ChEBI" id="CHEBI:190135"/>
    </ligand>
</feature>
<feature type="binding site" evidence="1">
    <location>
        <position position="174"/>
    </location>
    <ligand>
        <name>[2Fe-2S] cluster</name>
        <dbReference type="ChEBI" id="CHEBI:190135"/>
    </ligand>
</feature>
<feature type="binding site" evidence="1">
    <location>
        <position position="233"/>
    </location>
    <ligand>
        <name>[2Fe-2S] cluster</name>
        <dbReference type="ChEBI" id="CHEBI:190135"/>
    </ligand>
</feature>
<feature type="binding site" evidence="1">
    <location>
        <position position="303"/>
    </location>
    <ligand>
        <name>[2Fe-2S] cluster</name>
        <dbReference type="ChEBI" id="CHEBI:190135"/>
    </ligand>
</feature>
<protein>
    <recommendedName>
        <fullName evidence="1">Biotin synthase</fullName>
        <ecNumber evidence="1">2.8.1.6</ecNumber>
    </recommendedName>
</protein>
<name>BIOB_PARS2</name>
<evidence type="ECO:0000255" key="1">
    <source>
        <dbReference type="HAMAP-Rule" id="MF_01694"/>
    </source>
</evidence>
<evidence type="ECO:0000255" key="2">
    <source>
        <dbReference type="PROSITE-ProRule" id="PRU01266"/>
    </source>
</evidence>
<comment type="function">
    <text evidence="1">Catalyzes the conversion of dethiobiotin (DTB) to biotin by the insertion of a sulfur atom into dethiobiotin via a radical-based mechanism.</text>
</comment>
<comment type="catalytic activity">
    <reaction evidence="1">
        <text>(4R,5S)-dethiobiotin + (sulfur carrier)-SH + 2 reduced [2Fe-2S]-[ferredoxin] + 2 S-adenosyl-L-methionine = (sulfur carrier)-H + biotin + 2 5'-deoxyadenosine + 2 L-methionine + 2 oxidized [2Fe-2S]-[ferredoxin]</text>
        <dbReference type="Rhea" id="RHEA:22060"/>
        <dbReference type="Rhea" id="RHEA-COMP:10000"/>
        <dbReference type="Rhea" id="RHEA-COMP:10001"/>
        <dbReference type="Rhea" id="RHEA-COMP:14737"/>
        <dbReference type="Rhea" id="RHEA-COMP:14739"/>
        <dbReference type="ChEBI" id="CHEBI:17319"/>
        <dbReference type="ChEBI" id="CHEBI:29917"/>
        <dbReference type="ChEBI" id="CHEBI:33737"/>
        <dbReference type="ChEBI" id="CHEBI:33738"/>
        <dbReference type="ChEBI" id="CHEBI:57586"/>
        <dbReference type="ChEBI" id="CHEBI:57844"/>
        <dbReference type="ChEBI" id="CHEBI:59789"/>
        <dbReference type="ChEBI" id="CHEBI:64428"/>
        <dbReference type="ChEBI" id="CHEBI:149473"/>
        <dbReference type="EC" id="2.8.1.6"/>
    </reaction>
</comment>
<comment type="cofactor">
    <cofactor evidence="1">
        <name>[4Fe-4S] cluster</name>
        <dbReference type="ChEBI" id="CHEBI:49883"/>
    </cofactor>
    <text evidence="1">Binds 1 [4Fe-4S] cluster. The cluster is coordinated with 3 cysteines and an exchangeable S-adenosyl-L-methionine.</text>
</comment>
<comment type="cofactor">
    <cofactor evidence="1">
        <name>[2Fe-2S] cluster</name>
        <dbReference type="ChEBI" id="CHEBI:190135"/>
    </cofactor>
    <text evidence="1">Binds 1 [2Fe-2S] cluster. The cluster is coordinated with 3 cysteines and 1 arginine.</text>
</comment>
<comment type="pathway">
    <text evidence="1">Cofactor biosynthesis; biotin biosynthesis; biotin from 7,8-diaminononanoate: step 2/2.</text>
</comment>
<comment type="subunit">
    <text evidence="1">Homodimer.</text>
</comment>
<comment type="similarity">
    <text evidence="1">Belongs to the radical SAM superfamily. Biotin synthase family.</text>
</comment>